<name>RL16_BORPD</name>
<evidence type="ECO:0000255" key="1">
    <source>
        <dbReference type="HAMAP-Rule" id="MF_01342"/>
    </source>
</evidence>
<evidence type="ECO:0000256" key="2">
    <source>
        <dbReference type="SAM" id="MobiDB-lite"/>
    </source>
</evidence>
<evidence type="ECO:0000305" key="3"/>
<dbReference type="EMBL" id="AM902716">
    <property type="protein sequence ID" value="CAP45297.1"/>
    <property type="molecule type" value="Genomic_DNA"/>
</dbReference>
<dbReference type="RefSeq" id="WP_006389610.1">
    <property type="nucleotide sequence ID" value="NZ_CP123364.1"/>
</dbReference>
<dbReference type="SMR" id="A9IIY9"/>
<dbReference type="STRING" id="94624.Bpet4945"/>
<dbReference type="GeneID" id="94357763"/>
<dbReference type="KEGG" id="bpt:Bpet4945"/>
<dbReference type="eggNOG" id="COG0197">
    <property type="taxonomic scope" value="Bacteria"/>
</dbReference>
<dbReference type="Proteomes" id="UP000001225">
    <property type="component" value="Chromosome"/>
</dbReference>
<dbReference type="GO" id="GO:0022625">
    <property type="term" value="C:cytosolic large ribosomal subunit"/>
    <property type="evidence" value="ECO:0007669"/>
    <property type="project" value="TreeGrafter"/>
</dbReference>
<dbReference type="GO" id="GO:0019843">
    <property type="term" value="F:rRNA binding"/>
    <property type="evidence" value="ECO:0007669"/>
    <property type="project" value="UniProtKB-UniRule"/>
</dbReference>
<dbReference type="GO" id="GO:0003735">
    <property type="term" value="F:structural constituent of ribosome"/>
    <property type="evidence" value="ECO:0007669"/>
    <property type="project" value="InterPro"/>
</dbReference>
<dbReference type="GO" id="GO:0000049">
    <property type="term" value="F:tRNA binding"/>
    <property type="evidence" value="ECO:0007669"/>
    <property type="project" value="UniProtKB-KW"/>
</dbReference>
<dbReference type="GO" id="GO:0006412">
    <property type="term" value="P:translation"/>
    <property type="evidence" value="ECO:0007669"/>
    <property type="project" value="UniProtKB-UniRule"/>
</dbReference>
<dbReference type="CDD" id="cd01433">
    <property type="entry name" value="Ribosomal_L16_L10e"/>
    <property type="match status" value="1"/>
</dbReference>
<dbReference type="FunFam" id="3.90.1170.10:FF:000001">
    <property type="entry name" value="50S ribosomal protein L16"/>
    <property type="match status" value="1"/>
</dbReference>
<dbReference type="Gene3D" id="3.90.1170.10">
    <property type="entry name" value="Ribosomal protein L10e/L16"/>
    <property type="match status" value="1"/>
</dbReference>
<dbReference type="HAMAP" id="MF_01342">
    <property type="entry name" value="Ribosomal_uL16"/>
    <property type="match status" value="1"/>
</dbReference>
<dbReference type="InterPro" id="IPR047873">
    <property type="entry name" value="Ribosomal_uL16"/>
</dbReference>
<dbReference type="InterPro" id="IPR000114">
    <property type="entry name" value="Ribosomal_uL16_bact-type"/>
</dbReference>
<dbReference type="InterPro" id="IPR020798">
    <property type="entry name" value="Ribosomal_uL16_CS"/>
</dbReference>
<dbReference type="InterPro" id="IPR016180">
    <property type="entry name" value="Ribosomal_uL16_dom"/>
</dbReference>
<dbReference type="InterPro" id="IPR036920">
    <property type="entry name" value="Ribosomal_uL16_sf"/>
</dbReference>
<dbReference type="NCBIfam" id="TIGR01164">
    <property type="entry name" value="rplP_bact"/>
    <property type="match status" value="1"/>
</dbReference>
<dbReference type="PANTHER" id="PTHR12220">
    <property type="entry name" value="50S/60S RIBOSOMAL PROTEIN L16"/>
    <property type="match status" value="1"/>
</dbReference>
<dbReference type="PANTHER" id="PTHR12220:SF13">
    <property type="entry name" value="LARGE RIBOSOMAL SUBUNIT PROTEIN UL16M"/>
    <property type="match status" value="1"/>
</dbReference>
<dbReference type="Pfam" id="PF00252">
    <property type="entry name" value="Ribosomal_L16"/>
    <property type="match status" value="1"/>
</dbReference>
<dbReference type="PRINTS" id="PR00060">
    <property type="entry name" value="RIBOSOMALL16"/>
</dbReference>
<dbReference type="SUPFAM" id="SSF54686">
    <property type="entry name" value="Ribosomal protein L16p/L10e"/>
    <property type="match status" value="1"/>
</dbReference>
<dbReference type="PROSITE" id="PS00586">
    <property type="entry name" value="RIBOSOMAL_L16_1"/>
    <property type="match status" value="1"/>
</dbReference>
<dbReference type="PROSITE" id="PS00701">
    <property type="entry name" value="RIBOSOMAL_L16_2"/>
    <property type="match status" value="1"/>
</dbReference>
<keyword id="KW-0687">Ribonucleoprotein</keyword>
<keyword id="KW-0689">Ribosomal protein</keyword>
<keyword id="KW-0694">RNA-binding</keyword>
<keyword id="KW-0699">rRNA-binding</keyword>
<keyword id="KW-0820">tRNA-binding</keyword>
<sequence>MLQPSRRKYRKEQKGRNTGLATRGTHVSFGEFGLKATGRGRLTARQIEAARRAINRHIKRGGRIWIRIFPDKPISQKPAEVRMGNGKGNPEYWVAEIQPGKVLYEMEGVSEELAREAFRLAAAKLPISTTFVARHIGA</sequence>
<accession>A9IIY9</accession>
<comment type="function">
    <text evidence="1">Binds 23S rRNA and is also seen to make contacts with the A and possibly P site tRNAs.</text>
</comment>
<comment type="subunit">
    <text evidence="1">Part of the 50S ribosomal subunit.</text>
</comment>
<comment type="similarity">
    <text evidence="1">Belongs to the universal ribosomal protein uL16 family.</text>
</comment>
<organism>
    <name type="scientific">Bordetella petrii (strain ATCC BAA-461 / DSM 12804 / CCUG 43448)</name>
    <dbReference type="NCBI Taxonomy" id="340100"/>
    <lineage>
        <taxon>Bacteria</taxon>
        <taxon>Pseudomonadati</taxon>
        <taxon>Pseudomonadota</taxon>
        <taxon>Betaproteobacteria</taxon>
        <taxon>Burkholderiales</taxon>
        <taxon>Alcaligenaceae</taxon>
        <taxon>Bordetella</taxon>
    </lineage>
</organism>
<reference key="1">
    <citation type="journal article" date="2008" name="BMC Genomics">
        <title>The missing link: Bordetella petrii is endowed with both the metabolic versatility of environmental bacteria and virulence traits of pathogenic Bordetellae.</title>
        <authorList>
            <person name="Gross R."/>
            <person name="Guzman C.A."/>
            <person name="Sebaihia M."/>
            <person name="Martin dos Santos V.A.P."/>
            <person name="Pieper D.H."/>
            <person name="Koebnik R."/>
            <person name="Lechner M."/>
            <person name="Bartels D."/>
            <person name="Buhrmester J."/>
            <person name="Choudhuri J.V."/>
            <person name="Ebensen T."/>
            <person name="Gaigalat L."/>
            <person name="Herrmann S."/>
            <person name="Khachane A.N."/>
            <person name="Larisch C."/>
            <person name="Link S."/>
            <person name="Linke B."/>
            <person name="Meyer F."/>
            <person name="Mormann S."/>
            <person name="Nakunst D."/>
            <person name="Rueckert C."/>
            <person name="Schneiker-Bekel S."/>
            <person name="Schulze K."/>
            <person name="Voerholter F.-J."/>
            <person name="Yevsa T."/>
            <person name="Engle J.T."/>
            <person name="Goldman W.E."/>
            <person name="Puehler A."/>
            <person name="Goebel U.B."/>
            <person name="Goesmann A."/>
            <person name="Bloecker H."/>
            <person name="Kaiser O."/>
            <person name="Martinez-Arias R."/>
        </authorList>
    </citation>
    <scope>NUCLEOTIDE SEQUENCE [LARGE SCALE GENOMIC DNA]</scope>
    <source>
        <strain>ATCC BAA-461 / DSM 12804 / CCUG 43448</strain>
    </source>
</reference>
<gene>
    <name evidence="1" type="primary">rplP</name>
    <name type="ordered locus">Bpet4945</name>
</gene>
<proteinExistence type="inferred from homology"/>
<protein>
    <recommendedName>
        <fullName evidence="1">Large ribosomal subunit protein uL16</fullName>
    </recommendedName>
    <alternativeName>
        <fullName evidence="3">50S ribosomal protein L16</fullName>
    </alternativeName>
</protein>
<feature type="chain" id="PRO_1000142932" description="Large ribosomal subunit protein uL16">
    <location>
        <begin position="1"/>
        <end position="138"/>
    </location>
</feature>
<feature type="region of interest" description="Disordered" evidence="2">
    <location>
        <begin position="1"/>
        <end position="22"/>
    </location>
</feature>
<feature type="compositionally biased region" description="Basic residues" evidence="2">
    <location>
        <begin position="1"/>
        <end position="13"/>
    </location>
</feature>